<evidence type="ECO:0000255" key="1">
    <source>
        <dbReference type="HAMAP-Rule" id="MF_00984"/>
    </source>
</evidence>
<evidence type="ECO:0000256" key="2">
    <source>
        <dbReference type="SAM" id="MobiDB-lite"/>
    </source>
</evidence>
<comment type="function">
    <text evidence="1">Plays an important role in DNA replication, recombination and repair. Binds to ssDNA and to an array of partner proteins to recruit them to their sites of action during DNA metabolism.</text>
</comment>
<comment type="subunit">
    <text evidence="1">Homotetramer.</text>
</comment>
<name>SSB_NITEU</name>
<feature type="chain" id="PRO_0000096072" description="Single-stranded DNA-binding protein">
    <location>
        <begin position="1"/>
        <end position="149"/>
    </location>
</feature>
<feature type="domain" description="SSB" evidence="1">
    <location>
        <begin position="4"/>
        <end position="108"/>
    </location>
</feature>
<feature type="region of interest" description="Disordered" evidence="2">
    <location>
        <begin position="105"/>
        <end position="149"/>
    </location>
</feature>
<feature type="short sequence motif" description="Important for interaction with partner proteins" evidence="1">
    <location>
        <begin position="144"/>
        <end position="149"/>
    </location>
</feature>
<feature type="compositionally biased region" description="Polar residues" evidence="2">
    <location>
        <begin position="127"/>
        <end position="139"/>
    </location>
</feature>
<organism>
    <name type="scientific">Nitrosomonas europaea (strain ATCC 19718 / CIP 103999 / KCTC 2705 / NBRC 14298)</name>
    <dbReference type="NCBI Taxonomy" id="228410"/>
    <lineage>
        <taxon>Bacteria</taxon>
        <taxon>Pseudomonadati</taxon>
        <taxon>Pseudomonadota</taxon>
        <taxon>Betaproteobacteria</taxon>
        <taxon>Nitrosomonadales</taxon>
        <taxon>Nitrosomonadaceae</taxon>
        <taxon>Nitrosomonas</taxon>
    </lineage>
</organism>
<accession>Q82S98</accession>
<sequence length="149" mass="16812">MASLNKVMLIGNLGRDPEIRYMPSGDAMANLNIATTDTWKDKGGEKQERTEWHRVVMFGKQAEIAGEYLKKGSQIYIEGRLQTRKWTDKSNVERYTTEIVADRMQMLGGRSGGGSYDPPADRDHDYQSQSTPPAKSNTGFDDMEDDIPF</sequence>
<gene>
    <name type="primary">ssb</name>
    <name type="ordered locus">NE2453</name>
</gene>
<proteinExistence type="inferred from homology"/>
<reference key="1">
    <citation type="journal article" date="2003" name="J. Bacteriol.">
        <title>Complete genome sequence of the ammonia-oxidizing bacterium and obligate chemolithoautotroph Nitrosomonas europaea.</title>
        <authorList>
            <person name="Chain P."/>
            <person name="Lamerdin J.E."/>
            <person name="Larimer F.W."/>
            <person name="Regala W."/>
            <person name="Lao V."/>
            <person name="Land M.L."/>
            <person name="Hauser L."/>
            <person name="Hooper A.B."/>
            <person name="Klotz M.G."/>
            <person name="Norton J."/>
            <person name="Sayavedra-Soto L.A."/>
            <person name="Arciero D.M."/>
            <person name="Hommes N.G."/>
            <person name="Whittaker M.M."/>
            <person name="Arp D.J."/>
        </authorList>
    </citation>
    <scope>NUCLEOTIDE SEQUENCE [LARGE SCALE GENOMIC DNA]</scope>
    <source>
        <strain>ATCC 19718 / CIP 103999 / KCTC 2705 / NBRC 14298</strain>
    </source>
</reference>
<dbReference type="EMBL" id="AL954747">
    <property type="protein sequence ID" value="CAD86365.1"/>
    <property type="molecule type" value="Genomic_DNA"/>
</dbReference>
<dbReference type="RefSeq" id="WP_011112916.1">
    <property type="nucleotide sequence ID" value="NC_004757.1"/>
</dbReference>
<dbReference type="SMR" id="Q82S98"/>
<dbReference type="STRING" id="228410.NE2453"/>
<dbReference type="GeneID" id="87105582"/>
<dbReference type="KEGG" id="neu:NE2453"/>
<dbReference type="eggNOG" id="COG0629">
    <property type="taxonomic scope" value="Bacteria"/>
</dbReference>
<dbReference type="HOGENOM" id="CLU_078758_0_2_4"/>
<dbReference type="OrthoDB" id="9809878at2"/>
<dbReference type="PhylomeDB" id="Q82S98"/>
<dbReference type="Proteomes" id="UP000001416">
    <property type="component" value="Chromosome"/>
</dbReference>
<dbReference type="GO" id="GO:0009295">
    <property type="term" value="C:nucleoid"/>
    <property type="evidence" value="ECO:0007669"/>
    <property type="project" value="TreeGrafter"/>
</dbReference>
<dbReference type="GO" id="GO:0003697">
    <property type="term" value="F:single-stranded DNA binding"/>
    <property type="evidence" value="ECO:0007669"/>
    <property type="project" value="UniProtKB-UniRule"/>
</dbReference>
<dbReference type="GO" id="GO:0006310">
    <property type="term" value="P:DNA recombination"/>
    <property type="evidence" value="ECO:0007669"/>
    <property type="project" value="UniProtKB-UniRule"/>
</dbReference>
<dbReference type="GO" id="GO:0006281">
    <property type="term" value="P:DNA repair"/>
    <property type="evidence" value="ECO:0007669"/>
    <property type="project" value="UniProtKB-UniRule"/>
</dbReference>
<dbReference type="GO" id="GO:0006260">
    <property type="term" value="P:DNA replication"/>
    <property type="evidence" value="ECO:0007669"/>
    <property type="project" value="UniProtKB-UniRule"/>
</dbReference>
<dbReference type="CDD" id="cd04496">
    <property type="entry name" value="SSB_OBF"/>
    <property type="match status" value="1"/>
</dbReference>
<dbReference type="Gene3D" id="2.40.50.140">
    <property type="entry name" value="Nucleic acid-binding proteins"/>
    <property type="match status" value="1"/>
</dbReference>
<dbReference type="HAMAP" id="MF_00984">
    <property type="entry name" value="SSB"/>
    <property type="match status" value="1"/>
</dbReference>
<dbReference type="InterPro" id="IPR012340">
    <property type="entry name" value="NA-bd_OB-fold"/>
</dbReference>
<dbReference type="InterPro" id="IPR000424">
    <property type="entry name" value="Primosome_PriB/ssb"/>
</dbReference>
<dbReference type="InterPro" id="IPR011344">
    <property type="entry name" value="ssDNA-bd"/>
</dbReference>
<dbReference type="NCBIfam" id="TIGR00621">
    <property type="entry name" value="ssb"/>
    <property type="match status" value="1"/>
</dbReference>
<dbReference type="PANTHER" id="PTHR10302">
    <property type="entry name" value="SINGLE-STRANDED DNA-BINDING PROTEIN"/>
    <property type="match status" value="1"/>
</dbReference>
<dbReference type="PANTHER" id="PTHR10302:SF27">
    <property type="entry name" value="SINGLE-STRANDED DNA-BINDING PROTEIN"/>
    <property type="match status" value="1"/>
</dbReference>
<dbReference type="Pfam" id="PF00436">
    <property type="entry name" value="SSB"/>
    <property type="match status" value="1"/>
</dbReference>
<dbReference type="PIRSF" id="PIRSF002070">
    <property type="entry name" value="SSB"/>
    <property type="match status" value="1"/>
</dbReference>
<dbReference type="SUPFAM" id="SSF50249">
    <property type="entry name" value="Nucleic acid-binding proteins"/>
    <property type="match status" value="1"/>
</dbReference>
<dbReference type="PROSITE" id="PS50935">
    <property type="entry name" value="SSB"/>
    <property type="match status" value="1"/>
</dbReference>
<keyword id="KW-0227">DNA damage</keyword>
<keyword id="KW-0233">DNA recombination</keyword>
<keyword id="KW-0234">DNA repair</keyword>
<keyword id="KW-0235">DNA replication</keyword>
<keyword id="KW-0238">DNA-binding</keyword>
<keyword id="KW-1185">Reference proteome</keyword>
<protein>
    <recommendedName>
        <fullName evidence="1">Single-stranded DNA-binding protein</fullName>
        <shortName evidence="1">SSB</shortName>
    </recommendedName>
</protein>